<proteinExistence type="inferred from homology"/>
<protein>
    <recommendedName>
        <fullName evidence="1">Uridine kinase</fullName>
        <ecNumber evidence="1">2.7.1.48</ecNumber>
    </recommendedName>
    <alternativeName>
        <fullName evidence="1">Cytidine monophosphokinase</fullName>
    </alternativeName>
    <alternativeName>
        <fullName evidence="1">Uridine monophosphokinase</fullName>
    </alternativeName>
</protein>
<dbReference type="EC" id="2.7.1.48" evidence="1"/>
<dbReference type="EMBL" id="CP000931">
    <property type="protein sequence ID" value="ABZ76938.1"/>
    <property type="molecule type" value="Genomic_DNA"/>
</dbReference>
<dbReference type="RefSeq" id="WP_012277466.1">
    <property type="nucleotide sequence ID" value="NC_010334.1"/>
</dbReference>
<dbReference type="SMR" id="B0TJ03"/>
<dbReference type="STRING" id="458817.Shal_2379"/>
<dbReference type="KEGG" id="shl:Shal_2379"/>
<dbReference type="eggNOG" id="COG0572">
    <property type="taxonomic scope" value="Bacteria"/>
</dbReference>
<dbReference type="HOGENOM" id="CLU_021278_1_2_6"/>
<dbReference type="OrthoDB" id="9777642at2"/>
<dbReference type="UniPathway" id="UPA00574">
    <property type="reaction ID" value="UER00637"/>
</dbReference>
<dbReference type="UniPathway" id="UPA00579">
    <property type="reaction ID" value="UER00640"/>
</dbReference>
<dbReference type="Proteomes" id="UP000001317">
    <property type="component" value="Chromosome"/>
</dbReference>
<dbReference type="GO" id="GO:0005737">
    <property type="term" value="C:cytoplasm"/>
    <property type="evidence" value="ECO:0007669"/>
    <property type="project" value="UniProtKB-SubCell"/>
</dbReference>
<dbReference type="GO" id="GO:0005524">
    <property type="term" value="F:ATP binding"/>
    <property type="evidence" value="ECO:0007669"/>
    <property type="project" value="UniProtKB-UniRule"/>
</dbReference>
<dbReference type="GO" id="GO:0043771">
    <property type="term" value="F:cytidine kinase activity"/>
    <property type="evidence" value="ECO:0007669"/>
    <property type="project" value="RHEA"/>
</dbReference>
<dbReference type="GO" id="GO:0004849">
    <property type="term" value="F:uridine kinase activity"/>
    <property type="evidence" value="ECO:0007669"/>
    <property type="project" value="UniProtKB-UniRule"/>
</dbReference>
<dbReference type="GO" id="GO:0044211">
    <property type="term" value="P:CTP salvage"/>
    <property type="evidence" value="ECO:0007669"/>
    <property type="project" value="UniProtKB-UniRule"/>
</dbReference>
<dbReference type="GO" id="GO:0044206">
    <property type="term" value="P:UMP salvage"/>
    <property type="evidence" value="ECO:0007669"/>
    <property type="project" value="UniProtKB-UniRule"/>
</dbReference>
<dbReference type="CDD" id="cd02023">
    <property type="entry name" value="UMPK"/>
    <property type="match status" value="1"/>
</dbReference>
<dbReference type="Gene3D" id="3.40.50.300">
    <property type="entry name" value="P-loop containing nucleotide triphosphate hydrolases"/>
    <property type="match status" value="1"/>
</dbReference>
<dbReference type="HAMAP" id="MF_00551">
    <property type="entry name" value="Uridine_kinase"/>
    <property type="match status" value="1"/>
</dbReference>
<dbReference type="InterPro" id="IPR027417">
    <property type="entry name" value="P-loop_NTPase"/>
</dbReference>
<dbReference type="InterPro" id="IPR006083">
    <property type="entry name" value="PRK/URK"/>
</dbReference>
<dbReference type="InterPro" id="IPR026008">
    <property type="entry name" value="Uridine_kinase"/>
</dbReference>
<dbReference type="InterPro" id="IPR000764">
    <property type="entry name" value="Uridine_kinase-like"/>
</dbReference>
<dbReference type="NCBIfam" id="NF004018">
    <property type="entry name" value="PRK05480.1"/>
    <property type="match status" value="1"/>
</dbReference>
<dbReference type="NCBIfam" id="TIGR00235">
    <property type="entry name" value="udk"/>
    <property type="match status" value="1"/>
</dbReference>
<dbReference type="PANTHER" id="PTHR10285">
    <property type="entry name" value="URIDINE KINASE"/>
    <property type="match status" value="1"/>
</dbReference>
<dbReference type="Pfam" id="PF00485">
    <property type="entry name" value="PRK"/>
    <property type="match status" value="1"/>
</dbReference>
<dbReference type="PRINTS" id="PR00988">
    <property type="entry name" value="URIDINKINASE"/>
</dbReference>
<dbReference type="SUPFAM" id="SSF52540">
    <property type="entry name" value="P-loop containing nucleoside triphosphate hydrolases"/>
    <property type="match status" value="1"/>
</dbReference>
<evidence type="ECO:0000255" key="1">
    <source>
        <dbReference type="HAMAP-Rule" id="MF_00551"/>
    </source>
</evidence>
<comment type="catalytic activity">
    <reaction evidence="1">
        <text>uridine + ATP = UMP + ADP + H(+)</text>
        <dbReference type="Rhea" id="RHEA:16825"/>
        <dbReference type="ChEBI" id="CHEBI:15378"/>
        <dbReference type="ChEBI" id="CHEBI:16704"/>
        <dbReference type="ChEBI" id="CHEBI:30616"/>
        <dbReference type="ChEBI" id="CHEBI:57865"/>
        <dbReference type="ChEBI" id="CHEBI:456216"/>
        <dbReference type="EC" id="2.7.1.48"/>
    </reaction>
</comment>
<comment type="catalytic activity">
    <reaction evidence="1">
        <text>cytidine + ATP = CMP + ADP + H(+)</text>
        <dbReference type="Rhea" id="RHEA:24674"/>
        <dbReference type="ChEBI" id="CHEBI:15378"/>
        <dbReference type="ChEBI" id="CHEBI:17562"/>
        <dbReference type="ChEBI" id="CHEBI:30616"/>
        <dbReference type="ChEBI" id="CHEBI:60377"/>
        <dbReference type="ChEBI" id="CHEBI:456216"/>
        <dbReference type="EC" id="2.7.1.48"/>
    </reaction>
</comment>
<comment type="pathway">
    <text evidence="1">Pyrimidine metabolism; CTP biosynthesis via salvage pathway; CTP from cytidine: step 1/3.</text>
</comment>
<comment type="pathway">
    <text evidence="1">Pyrimidine metabolism; UMP biosynthesis via salvage pathway; UMP from uridine: step 1/1.</text>
</comment>
<comment type="subcellular location">
    <subcellularLocation>
        <location evidence="1">Cytoplasm</location>
    </subcellularLocation>
</comment>
<comment type="similarity">
    <text evidence="1">Belongs to the uridine kinase family.</text>
</comment>
<feature type="chain" id="PRO_1000081971" description="Uridine kinase">
    <location>
        <begin position="1"/>
        <end position="212"/>
    </location>
</feature>
<feature type="binding site" evidence="1">
    <location>
        <begin position="13"/>
        <end position="20"/>
    </location>
    <ligand>
        <name>ATP</name>
        <dbReference type="ChEBI" id="CHEBI:30616"/>
    </ligand>
</feature>
<keyword id="KW-0067">ATP-binding</keyword>
<keyword id="KW-0963">Cytoplasm</keyword>
<keyword id="KW-0418">Kinase</keyword>
<keyword id="KW-0547">Nucleotide-binding</keyword>
<keyword id="KW-0808">Transferase</keyword>
<gene>
    <name evidence="1" type="primary">udk</name>
    <name type="ordered locus">Shal_2379</name>
</gene>
<reference key="1">
    <citation type="submission" date="2008-01" db="EMBL/GenBank/DDBJ databases">
        <title>Complete sequence of Shewanella halifaxensis HAW-EB4.</title>
        <authorList>
            <consortium name="US DOE Joint Genome Institute"/>
            <person name="Copeland A."/>
            <person name="Lucas S."/>
            <person name="Lapidus A."/>
            <person name="Glavina del Rio T."/>
            <person name="Dalin E."/>
            <person name="Tice H."/>
            <person name="Bruce D."/>
            <person name="Goodwin L."/>
            <person name="Pitluck S."/>
            <person name="Sims D."/>
            <person name="Brettin T."/>
            <person name="Detter J.C."/>
            <person name="Han C."/>
            <person name="Kuske C.R."/>
            <person name="Schmutz J."/>
            <person name="Larimer F."/>
            <person name="Land M."/>
            <person name="Hauser L."/>
            <person name="Kyrpides N."/>
            <person name="Kim E."/>
            <person name="Zhao J.-S."/>
            <person name="Richardson P."/>
        </authorList>
    </citation>
    <scope>NUCLEOTIDE SEQUENCE [LARGE SCALE GENOMIC DNA]</scope>
    <source>
        <strain>HAW-EB4</strain>
    </source>
</reference>
<name>URK_SHEHH</name>
<organism>
    <name type="scientific">Shewanella halifaxensis (strain HAW-EB4)</name>
    <dbReference type="NCBI Taxonomy" id="458817"/>
    <lineage>
        <taxon>Bacteria</taxon>
        <taxon>Pseudomonadati</taxon>
        <taxon>Pseudomonadota</taxon>
        <taxon>Gammaproteobacteria</taxon>
        <taxon>Alteromonadales</taxon>
        <taxon>Shewanellaceae</taxon>
        <taxon>Shewanella</taxon>
    </lineage>
</organism>
<sequence length="212" mass="23975">MNSKDCVVIGIAGASASGKSLIAKTIYEELCRDLGTDQIGVIAEDAYYRDQGHLSMDQRVLTNYDHPKALDHELLCTHLRALKQGHAVDIPVYSYNDHTRTDEKVTLTPKKVIILEGILLLTDPALRKEMDASVFMDTPLDICFMRRLSRDVAERGRTMESVMQQYTETVRPMFLQFIEPSKQYADIIVPRGGKNRIATDILKARIQHLLAK</sequence>
<accession>B0TJ03</accession>